<proteinExistence type="inferred from homology"/>
<sequence>MTRKDFFNVLTRYFPWVDEQTFMSFEKYKTIIQKYNQIFNLTRLDSDDKIYQNFFLDSLAPYKELDFFTQNTNLKLIDIGSGSGIPGVVLKIIFKNLNLTLLEANQKRCEFLKILTQELGLNDVLIWNMRAEDLTQSMRESFDIATSRAVASLDKILEISAAFVKVNGYLIQPKSIKFYEEELKAKNIIKTLYLERIALKDFWENDYHHLVGVYLKKQITPLQFPRPWNLILKKPL</sequence>
<organism>
    <name type="scientific">Ureaplasma parvum serovar 3 (strain ATCC 27815 / 27 / NCTC 11736)</name>
    <dbReference type="NCBI Taxonomy" id="505682"/>
    <lineage>
        <taxon>Bacteria</taxon>
        <taxon>Bacillati</taxon>
        <taxon>Mycoplasmatota</taxon>
        <taxon>Mycoplasmoidales</taxon>
        <taxon>Mycoplasmoidaceae</taxon>
        <taxon>Ureaplasma</taxon>
    </lineage>
</organism>
<dbReference type="EC" id="2.1.1.-" evidence="1"/>
<dbReference type="EMBL" id="CP000942">
    <property type="protein sequence ID" value="ACA33161.1"/>
    <property type="molecule type" value="Genomic_DNA"/>
</dbReference>
<dbReference type="RefSeq" id="WP_006689024.1">
    <property type="nucleotide sequence ID" value="NC_010503.1"/>
</dbReference>
<dbReference type="SMR" id="B1AI25"/>
<dbReference type="GeneID" id="29672532"/>
<dbReference type="KEGG" id="upa:UPA3_0039"/>
<dbReference type="HOGENOM" id="CLU_065341_0_1_14"/>
<dbReference type="Proteomes" id="UP000002162">
    <property type="component" value="Chromosome"/>
</dbReference>
<dbReference type="GO" id="GO:0005829">
    <property type="term" value="C:cytosol"/>
    <property type="evidence" value="ECO:0007669"/>
    <property type="project" value="TreeGrafter"/>
</dbReference>
<dbReference type="GO" id="GO:0070043">
    <property type="term" value="F:rRNA (guanine-N7-)-methyltransferase activity"/>
    <property type="evidence" value="ECO:0007669"/>
    <property type="project" value="UniProtKB-UniRule"/>
</dbReference>
<dbReference type="CDD" id="cd02440">
    <property type="entry name" value="AdoMet_MTases"/>
    <property type="match status" value="1"/>
</dbReference>
<dbReference type="Gene3D" id="3.40.50.150">
    <property type="entry name" value="Vaccinia Virus protein VP39"/>
    <property type="match status" value="1"/>
</dbReference>
<dbReference type="HAMAP" id="MF_00074">
    <property type="entry name" value="16SrRNA_methyltr_G"/>
    <property type="match status" value="1"/>
</dbReference>
<dbReference type="InterPro" id="IPR003682">
    <property type="entry name" value="rRNA_ssu_MeTfrase_G"/>
</dbReference>
<dbReference type="InterPro" id="IPR029063">
    <property type="entry name" value="SAM-dependent_MTases_sf"/>
</dbReference>
<dbReference type="NCBIfam" id="TIGR00138">
    <property type="entry name" value="rsmG_gidB"/>
    <property type="match status" value="1"/>
</dbReference>
<dbReference type="PANTHER" id="PTHR31760">
    <property type="entry name" value="S-ADENOSYL-L-METHIONINE-DEPENDENT METHYLTRANSFERASES SUPERFAMILY PROTEIN"/>
    <property type="match status" value="1"/>
</dbReference>
<dbReference type="PANTHER" id="PTHR31760:SF0">
    <property type="entry name" value="S-ADENOSYL-L-METHIONINE-DEPENDENT METHYLTRANSFERASES SUPERFAMILY PROTEIN"/>
    <property type="match status" value="1"/>
</dbReference>
<dbReference type="Pfam" id="PF02527">
    <property type="entry name" value="GidB"/>
    <property type="match status" value="1"/>
</dbReference>
<dbReference type="SUPFAM" id="SSF53335">
    <property type="entry name" value="S-adenosyl-L-methionine-dependent methyltransferases"/>
    <property type="match status" value="1"/>
</dbReference>
<gene>
    <name evidence="1" type="primary">rsmG</name>
    <name type="ordered locus">UPA3_0039</name>
</gene>
<accession>B1AI25</accession>
<feature type="chain" id="PRO_0000335448" description="Ribosomal RNA small subunit methyltransferase G">
    <location>
        <begin position="1"/>
        <end position="236"/>
    </location>
</feature>
<feature type="binding site" evidence="1">
    <location>
        <position position="80"/>
    </location>
    <ligand>
        <name>S-adenosyl-L-methionine</name>
        <dbReference type="ChEBI" id="CHEBI:59789"/>
    </ligand>
</feature>
<feature type="binding site" evidence="1">
    <location>
        <begin position="131"/>
        <end position="132"/>
    </location>
    <ligand>
        <name>S-adenosyl-L-methionine</name>
        <dbReference type="ChEBI" id="CHEBI:59789"/>
    </ligand>
</feature>
<feature type="binding site" evidence="1">
    <location>
        <position position="148"/>
    </location>
    <ligand>
        <name>S-adenosyl-L-methionine</name>
        <dbReference type="ChEBI" id="CHEBI:59789"/>
    </ligand>
</feature>
<comment type="function">
    <text evidence="1">Specifically methylates the N7 position of a guanine in 16S rRNA.</text>
</comment>
<comment type="subcellular location">
    <subcellularLocation>
        <location evidence="1">Cytoplasm</location>
    </subcellularLocation>
</comment>
<comment type="similarity">
    <text evidence="1">Belongs to the methyltransferase superfamily. RNA methyltransferase RsmG family.</text>
</comment>
<protein>
    <recommendedName>
        <fullName evidence="1">Ribosomal RNA small subunit methyltransferase G</fullName>
        <ecNumber evidence="1">2.1.1.-</ecNumber>
    </recommendedName>
    <alternativeName>
        <fullName evidence="1">16S rRNA 7-methylguanosine methyltransferase</fullName>
        <shortName evidence="1">16S rRNA m7G methyltransferase</shortName>
    </alternativeName>
</protein>
<name>RSMG_UREP2</name>
<reference key="1">
    <citation type="submission" date="2008-02" db="EMBL/GenBank/DDBJ databases">
        <title>Genome sequence of Ureaplasma parvum serovar 3.</title>
        <authorList>
            <person name="Methe B.A."/>
            <person name="Glass J."/>
            <person name="Waites K."/>
            <person name="Shrivastava S."/>
        </authorList>
    </citation>
    <scope>NUCLEOTIDE SEQUENCE [LARGE SCALE GENOMIC DNA]</scope>
    <source>
        <strain>ATCC 27815 / 27 / NCTC 11736</strain>
    </source>
</reference>
<evidence type="ECO:0000255" key="1">
    <source>
        <dbReference type="HAMAP-Rule" id="MF_00074"/>
    </source>
</evidence>
<keyword id="KW-0963">Cytoplasm</keyword>
<keyword id="KW-0489">Methyltransferase</keyword>
<keyword id="KW-0698">rRNA processing</keyword>
<keyword id="KW-0949">S-adenosyl-L-methionine</keyword>
<keyword id="KW-0808">Transferase</keyword>